<keyword id="KW-0238">DNA-binding</keyword>
<keyword id="KW-0426">Late protein</keyword>
<keyword id="KW-0597">Phosphoprotein</keyword>
<keyword id="KW-1185">Reference proteome</keyword>
<keyword id="KW-0677">Repeat</keyword>
<keyword id="KW-0543">Viral nucleoprotein</keyword>
<keyword id="KW-0946">Virion</keyword>
<name>BVCP_NPVOP</name>
<organismHost>
    <name type="scientific">Orgyia pseudotsugata</name>
    <name type="common">Douglas-fir tussock moth</name>
    <dbReference type="NCBI Taxonomy" id="33414"/>
</organismHost>
<comment type="function">
    <text>Thought to be responsible for DNA condensation during packaging of the nucleocapsids.</text>
</comment>
<comment type="subcellular location">
    <subcellularLocation>
        <location evidence="3">Virion</location>
    </subcellularLocation>
</comment>
<comment type="PTM">
    <text>Probably phosphorylated in infected cells.</text>
</comment>
<sequence>MVYRRRRSRSADGTYTRRRRSSGYRRRPGRPRTYRRSRSATRRSGYRRRRY</sequence>
<feature type="initiator methionine" description="Removed; by host" evidence="1">
    <location>
        <position position="1"/>
    </location>
</feature>
<feature type="chain" id="PRO_0000132808" description="DNA-binding protein">
    <location>
        <begin position="2"/>
        <end position="51"/>
    </location>
</feature>
<feature type="repeat" description="1">
    <location>
        <begin position="5"/>
        <end position="10"/>
    </location>
</feature>
<feature type="repeat" description="2">
    <location>
        <begin position="17"/>
        <end position="22"/>
    </location>
</feature>
<feature type="region of interest" description="Disordered" evidence="2">
    <location>
        <begin position="1"/>
        <end position="51"/>
    </location>
</feature>
<feature type="region of interest" description="2 X 6 AA repeats of R-R-R-R-S-S">
    <location>
        <begin position="5"/>
        <end position="22"/>
    </location>
</feature>
<feature type="compositionally biased region" description="Basic residues" evidence="2">
    <location>
        <begin position="16"/>
        <end position="51"/>
    </location>
</feature>
<proteinExistence type="inferred from homology"/>
<organism>
    <name type="scientific">Orgyia pseudotsugata multicapsid polyhedrosis virus</name>
    <name type="common">OpMNPV</name>
    <dbReference type="NCBI Taxonomy" id="262177"/>
    <lineage>
        <taxon>Viruses</taxon>
        <taxon>Viruses incertae sedis</taxon>
        <taxon>Naldaviricetes</taxon>
        <taxon>Lefavirales</taxon>
        <taxon>Baculoviridae</taxon>
        <taxon>Alphabaculovirus</taxon>
        <taxon>Alphabaculovirus orpseudotsugatae</taxon>
    </lineage>
</organism>
<evidence type="ECO:0000250" key="1"/>
<evidence type="ECO:0000256" key="2">
    <source>
        <dbReference type="SAM" id="MobiDB-lite"/>
    </source>
</evidence>
<evidence type="ECO:0000305" key="3"/>
<protein>
    <recommendedName>
        <fullName>DNA-binding protein</fullName>
    </recommendedName>
    <alternativeName>
        <fullName>Arginine-rich protein 6.2 kDa</fullName>
    </alternativeName>
    <alternativeName>
        <fullName>Basic viral core protein</fullName>
    </alternativeName>
    <alternativeName>
        <fullName>Nucleocapsid protein</fullName>
    </alternativeName>
</protein>
<reference key="1">
    <citation type="journal article" date="1990" name="J. Gen. Virol.">
        <title>The p6.5 gene region of a nuclear polyhedrosis virus of Orgyia pseudotsugata: DNA sequence and transcriptional analysis of four late genes.</title>
        <authorList>
            <person name="Russell R.L.Q."/>
            <person name="Rohrmann G.F."/>
        </authorList>
    </citation>
    <scope>NUCLEOTIDE SEQUENCE [GENOMIC DNA]</scope>
</reference>
<reference key="2">
    <citation type="journal article" date="1990" name="Virology">
        <title>A capsid-associated protein of the multicapsid nuclear polyhedrosis virus of Orgyia pseudotsugata: genetic location, sequence, transcriptional mapping, and immunocytochemical characterization.</title>
        <authorList>
            <person name="Mueller R."/>
            <person name="Pearson M.N."/>
            <person name="Russell R.L.Q."/>
            <person name="Rohrmann G.F."/>
        </authorList>
    </citation>
    <scope>NUCLEOTIDE SEQUENCE [GENOMIC DNA]</scope>
</reference>
<reference key="3">
    <citation type="journal article" date="1997" name="Virology">
        <title>The sequence of the Orgyia pseudotsugata multinucleocapsid nuclear polyhedrosis virus genome.</title>
        <authorList>
            <person name="Ahrens C.H."/>
            <person name="Russell R.R."/>
            <person name="Funk C.J."/>
            <person name="Evans J."/>
            <person name="Harwood S."/>
            <person name="Rohrmann G.F."/>
        </authorList>
    </citation>
    <scope>NUCLEOTIDE SEQUENCE [LARGE SCALE GENOMIC DNA]</scope>
</reference>
<accession>P24648</accession>
<gene>
    <name type="primary">P6.5</name>
    <name type="ORF">ORF101</name>
</gene>
<dbReference type="EMBL" id="D13959">
    <property type="protein sequence ID" value="BAA03057.1"/>
    <property type="molecule type" value="Genomic_DNA"/>
</dbReference>
<dbReference type="EMBL" id="U75930">
    <property type="protein sequence ID" value="AAC59100.1"/>
    <property type="molecule type" value="Genomic_DNA"/>
</dbReference>
<dbReference type="PIR" id="D34526">
    <property type="entry name" value="VHNVMN"/>
</dbReference>
<dbReference type="RefSeq" id="NP_046257.1">
    <property type="nucleotide sequence ID" value="NC_001875.2"/>
</dbReference>
<dbReference type="KEGG" id="vg:912040"/>
<dbReference type="Proteomes" id="UP000009248">
    <property type="component" value="Genome"/>
</dbReference>
<dbReference type="GO" id="GO:0019013">
    <property type="term" value="C:viral nucleocapsid"/>
    <property type="evidence" value="ECO:0007669"/>
    <property type="project" value="UniProtKB-KW"/>
</dbReference>
<dbReference type="GO" id="GO:0003677">
    <property type="term" value="F:DNA binding"/>
    <property type="evidence" value="ECO:0007669"/>
    <property type="project" value="UniProtKB-KW"/>
</dbReference>